<dbReference type="EMBL" id="AM884176">
    <property type="protein sequence ID" value="CAP03659.1"/>
    <property type="molecule type" value="Genomic_DNA"/>
</dbReference>
<dbReference type="RefSeq" id="WP_009872230.1">
    <property type="nucleotide sequence ID" value="NC_010287.1"/>
</dbReference>
<dbReference type="RefSeq" id="YP_001654305.1">
    <property type="nucleotide sequence ID" value="NC_010287.1"/>
</dbReference>
<dbReference type="SMR" id="B0B972"/>
<dbReference type="GeneID" id="93065722"/>
<dbReference type="KEGG" id="ctb:CTL0215"/>
<dbReference type="PATRIC" id="fig|471472.4.peg.232"/>
<dbReference type="HOGENOM" id="CLU_148518_0_0_0"/>
<dbReference type="PRO" id="PR:B0B972"/>
<dbReference type="Proteomes" id="UP001154402">
    <property type="component" value="Chromosome"/>
</dbReference>
<dbReference type="GO" id="GO:0022627">
    <property type="term" value="C:cytosolic small ribosomal subunit"/>
    <property type="evidence" value="ECO:0007669"/>
    <property type="project" value="TreeGrafter"/>
</dbReference>
<dbReference type="GO" id="GO:0019843">
    <property type="term" value="F:rRNA binding"/>
    <property type="evidence" value="ECO:0007669"/>
    <property type="project" value="UniProtKB-UniRule"/>
</dbReference>
<dbReference type="GO" id="GO:0003735">
    <property type="term" value="F:structural constituent of ribosome"/>
    <property type="evidence" value="ECO:0007669"/>
    <property type="project" value="InterPro"/>
</dbReference>
<dbReference type="GO" id="GO:0006412">
    <property type="term" value="P:translation"/>
    <property type="evidence" value="ECO:0007669"/>
    <property type="project" value="UniProtKB-UniRule"/>
</dbReference>
<dbReference type="CDD" id="cd00353">
    <property type="entry name" value="Ribosomal_S15p_S13e"/>
    <property type="match status" value="1"/>
</dbReference>
<dbReference type="FunFam" id="1.10.287.10:FF:000002">
    <property type="entry name" value="30S ribosomal protein S15"/>
    <property type="match status" value="1"/>
</dbReference>
<dbReference type="Gene3D" id="6.10.250.3130">
    <property type="match status" value="1"/>
</dbReference>
<dbReference type="Gene3D" id="1.10.287.10">
    <property type="entry name" value="S15/NS1, RNA-binding"/>
    <property type="match status" value="1"/>
</dbReference>
<dbReference type="HAMAP" id="MF_01343_B">
    <property type="entry name" value="Ribosomal_uS15_B"/>
    <property type="match status" value="1"/>
</dbReference>
<dbReference type="InterPro" id="IPR000589">
    <property type="entry name" value="Ribosomal_uS15"/>
</dbReference>
<dbReference type="InterPro" id="IPR005290">
    <property type="entry name" value="Ribosomal_uS15_bac-type"/>
</dbReference>
<dbReference type="InterPro" id="IPR009068">
    <property type="entry name" value="uS15_NS1_RNA-bd_sf"/>
</dbReference>
<dbReference type="NCBIfam" id="TIGR00952">
    <property type="entry name" value="S15_bact"/>
    <property type="match status" value="1"/>
</dbReference>
<dbReference type="PANTHER" id="PTHR23321">
    <property type="entry name" value="RIBOSOMAL PROTEIN S15, BACTERIAL AND ORGANELLAR"/>
    <property type="match status" value="1"/>
</dbReference>
<dbReference type="PANTHER" id="PTHR23321:SF26">
    <property type="entry name" value="SMALL RIBOSOMAL SUBUNIT PROTEIN US15M"/>
    <property type="match status" value="1"/>
</dbReference>
<dbReference type="Pfam" id="PF00312">
    <property type="entry name" value="Ribosomal_S15"/>
    <property type="match status" value="1"/>
</dbReference>
<dbReference type="SMART" id="SM01387">
    <property type="entry name" value="Ribosomal_S15"/>
    <property type="match status" value="1"/>
</dbReference>
<dbReference type="SUPFAM" id="SSF47060">
    <property type="entry name" value="S15/NS1 RNA-binding domain"/>
    <property type="match status" value="1"/>
</dbReference>
<dbReference type="PROSITE" id="PS00362">
    <property type="entry name" value="RIBOSOMAL_S15"/>
    <property type="match status" value="1"/>
</dbReference>
<evidence type="ECO:0000255" key="1">
    <source>
        <dbReference type="HAMAP-Rule" id="MF_01343"/>
    </source>
</evidence>
<evidence type="ECO:0000305" key="2"/>
<gene>
    <name evidence="1" type="primary">rpsO</name>
    <name type="ordered locus">CTL0215</name>
</gene>
<feature type="chain" id="PRO_1000143093" description="Small ribosomal subunit protein uS15">
    <location>
        <begin position="1"/>
        <end position="89"/>
    </location>
</feature>
<organism>
    <name type="scientific">Chlamydia trachomatis serovar L2 (strain ATCC VR-902B / DSM 19102 / 434/Bu)</name>
    <dbReference type="NCBI Taxonomy" id="471472"/>
    <lineage>
        <taxon>Bacteria</taxon>
        <taxon>Pseudomonadati</taxon>
        <taxon>Chlamydiota</taxon>
        <taxon>Chlamydiia</taxon>
        <taxon>Chlamydiales</taxon>
        <taxon>Chlamydiaceae</taxon>
        <taxon>Chlamydia/Chlamydophila group</taxon>
        <taxon>Chlamydia</taxon>
    </lineage>
</organism>
<keyword id="KW-0687">Ribonucleoprotein</keyword>
<keyword id="KW-0689">Ribosomal protein</keyword>
<keyword id="KW-0694">RNA-binding</keyword>
<keyword id="KW-0699">rRNA-binding</keyword>
<name>RS15_CHLT2</name>
<accession>B0B972</accession>
<comment type="function">
    <text evidence="1">One of the primary rRNA binding proteins, it binds directly to 16S rRNA where it helps nucleate assembly of the platform of the 30S subunit by binding and bridging several RNA helices of the 16S rRNA.</text>
</comment>
<comment type="function">
    <text evidence="1">Forms an intersubunit bridge (bridge B4) with the 23S rRNA of the 50S subunit in the ribosome.</text>
</comment>
<comment type="subunit">
    <text evidence="1">Part of the 30S ribosomal subunit. Forms a bridge to the 50S subunit in the 70S ribosome, contacting the 23S rRNA.</text>
</comment>
<comment type="similarity">
    <text evidence="1">Belongs to the universal ribosomal protein uS15 family.</text>
</comment>
<proteinExistence type="inferred from homology"/>
<protein>
    <recommendedName>
        <fullName evidence="1">Small ribosomal subunit protein uS15</fullName>
    </recommendedName>
    <alternativeName>
        <fullName evidence="2">30S ribosomal protein S15</fullName>
    </alternativeName>
</protein>
<sequence>MSLDKGTKEEITKKFQLHEKDTGSADVQIAILTEHITELKEHLKRSPKDQNSRLALLKLVGQRRKLLEYLNSTDTERYKNLIARLNLRK</sequence>
<reference key="1">
    <citation type="journal article" date="2008" name="Genome Res.">
        <title>Chlamydia trachomatis: genome sequence analysis of lymphogranuloma venereum isolates.</title>
        <authorList>
            <person name="Thomson N.R."/>
            <person name="Holden M.T.G."/>
            <person name="Carder C."/>
            <person name="Lennard N."/>
            <person name="Lockey S.J."/>
            <person name="Marsh P."/>
            <person name="Skipp P."/>
            <person name="O'Connor C.D."/>
            <person name="Goodhead I."/>
            <person name="Norbertzcak H."/>
            <person name="Harris B."/>
            <person name="Ormond D."/>
            <person name="Rance R."/>
            <person name="Quail M.A."/>
            <person name="Parkhill J."/>
            <person name="Stephens R.S."/>
            <person name="Clarke I.N."/>
        </authorList>
    </citation>
    <scope>NUCLEOTIDE SEQUENCE [LARGE SCALE GENOMIC DNA]</scope>
    <source>
        <strain>ATCC VR-902B / DSM 19102 / 434/Bu</strain>
    </source>
</reference>